<feature type="transit peptide" description="Mitochondrion" evidence="2">
    <location>
        <begin position="1"/>
        <end status="unknown"/>
    </location>
</feature>
<feature type="chain" id="PRO_0000008667" description="Probable electron transfer flavoprotein-ubiquinone oxidoreductase, mitochondrial">
    <location>
        <begin status="unknown"/>
        <end position="631"/>
    </location>
</feature>
<feature type="domain" description="4Fe-4S ferredoxin-type" evidence="3">
    <location>
        <begin position="591"/>
        <end position="620"/>
    </location>
</feature>
<feature type="binding site" evidence="2">
    <location>
        <begin position="65"/>
        <end position="79"/>
    </location>
    <ligand>
        <name>FAD</name>
        <dbReference type="ChEBI" id="CHEBI:57692"/>
    </ligand>
</feature>
<feature type="binding site" evidence="2">
    <location>
        <position position="574"/>
    </location>
    <ligand>
        <name>[4Fe-4S] cluster</name>
        <dbReference type="ChEBI" id="CHEBI:49883"/>
    </ligand>
</feature>
<feature type="binding site" evidence="2">
    <location>
        <position position="600"/>
    </location>
    <ligand>
        <name>[4Fe-4S] cluster</name>
        <dbReference type="ChEBI" id="CHEBI:49883"/>
    </ligand>
</feature>
<feature type="binding site" evidence="2">
    <location>
        <position position="603"/>
    </location>
    <ligand>
        <name>[4Fe-4S] cluster</name>
        <dbReference type="ChEBI" id="CHEBI:49883"/>
    </ligand>
</feature>
<feature type="binding site" evidence="2">
    <location>
        <position position="606"/>
    </location>
    <ligand>
        <name>[4Fe-4S] cluster</name>
        <dbReference type="ChEBI" id="CHEBI:49883"/>
    </ligand>
</feature>
<evidence type="ECO:0000250" key="1"/>
<evidence type="ECO:0000255" key="2"/>
<evidence type="ECO:0000255" key="3">
    <source>
        <dbReference type="PROSITE-ProRule" id="PRU00711"/>
    </source>
</evidence>
<evidence type="ECO:0000269" key="4">
    <source>
    </source>
</evidence>
<evidence type="ECO:0000269" key="5">
    <source>
    </source>
</evidence>
<evidence type="ECO:0000269" key="6">
    <source>
    </source>
</evidence>
<evidence type="ECO:0000269" key="7">
    <source>
    </source>
</evidence>
<evidence type="ECO:0000269" key="8">
    <source>
    </source>
</evidence>
<evidence type="ECO:0000305" key="9"/>
<sequence>MIKFTNENLIRGIRMTISAKSRHLALGTDMTRKFSLSCRFLNKANLTEEEKELLNEPRARDYVDVCIVGGGPAGLATAIKLKQLDNSSGTGQLRVVVLEKSSVLGGQTVSGAILEPGVWKELFPDEKSDIGIPLPKELATLVTKEHLKFLKGKWAISVPEPSQMINKGRNYIVSLNQVVGYLGEKAEEVGVEVYPGIAVSDLIYDENNAVKGVITKDAGISKSGKPKETFERGMEFWARQTVLAEGCHGSLTKQALAKYDLRKGRQHQTYGLGIKEVWEVKPENFNKGFAAHTMGYPLTNDVYGGGFQYHFGDGLVTVGLVVGLDYKNPYVSPYKEFQKMKHHPYYSKVLEGGKCIAYAARALNEGGLQSVPKLNFPGGVLVGASAGFMNVPKIKGTHTAMKSGLLAAESIFESIKGLPVLEEVEDEDAKMAMFDKEATINLESYESAFKESSIYKELYEVRNIRPSFSGKLGGYGGMIYSGIDSLILKGKVPWTLKFDEKNDGEILEPASKYKPIEYPKPDGVISFDILTSVSRTGTYHDDDEPCHLRVPGQDMVKYAERSFPVWKGVESRFCPAGVYEFVKDEKSPVGTRLQINSQNCIHCKTCDIKAPRQDITWKVPEGGDGPKYTLT</sequence>
<organism>
    <name type="scientific">Saccharomyces cerevisiae (strain ATCC 204508 / S288c)</name>
    <name type="common">Baker's yeast</name>
    <dbReference type="NCBI Taxonomy" id="559292"/>
    <lineage>
        <taxon>Eukaryota</taxon>
        <taxon>Fungi</taxon>
        <taxon>Dikarya</taxon>
        <taxon>Ascomycota</taxon>
        <taxon>Saccharomycotina</taxon>
        <taxon>Saccharomycetes</taxon>
        <taxon>Saccharomycetales</taxon>
        <taxon>Saccharomycetaceae</taxon>
        <taxon>Saccharomyces</taxon>
    </lineage>
</organism>
<comment type="function">
    <text evidence="1">Accepts electrons from ETF and reduces ubiquinone.</text>
</comment>
<comment type="catalytic activity">
    <reaction>
        <text>a ubiquinone + reduced [electron-transfer flavoprotein] = a ubiquinol + oxidized [electron-transfer flavoprotein] + H(+)</text>
        <dbReference type="Rhea" id="RHEA:24052"/>
        <dbReference type="Rhea" id="RHEA-COMP:9565"/>
        <dbReference type="Rhea" id="RHEA-COMP:9566"/>
        <dbReference type="Rhea" id="RHEA-COMP:10685"/>
        <dbReference type="Rhea" id="RHEA-COMP:10686"/>
        <dbReference type="ChEBI" id="CHEBI:15378"/>
        <dbReference type="ChEBI" id="CHEBI:16389"/>
        <dbReference type="ChEBI" id="CHEBI:17976"/>
        <dbReference type="ChEBI" id="CHEBI:57692"/>
        <dbReference type="ChEBI" id="CHEBI:58307"/>
        <dbReference type="EC" id="1.5.5.1"/>
    </reaction>
</comment>
<comment type="cofactor">
    <cofactor evidence="1">
        <name>[4Fe-4S] cluster</name>
        <dbReference type="ChEBI" id="CHEBI:49883"/>
    </cofactor>
    <text evidence="1">Binds 1 [4Fe-4S] cluster.</text>
</comment>
<comment type="cofactor">
    <cofactor evidence="1">
        <name>FAD</name>
        <dbReference type="ChEBI" id="CHEBI:57692"/>
    </cofactor>
</comment>
<comment type="subcellular location">
    <subcellularLocation>
        <location evidence="4 5 7">Mitochondrion inner membrane</location>
    </subcellularLocation>
</comment>
<comment type="disruption phenotype">
    <text evidence="8">Displays higher growth rate and higher sensitivity to superoxide and heat stress, on nonfermentable carbon sources. Leads to decreased intracellular oxidation upon heat shock.</text>
</comment>
<comment type="miscellaneous">
    <text evidence="6">Present with 3320 molecules/cell in log phase SD medium.</text>
</comment>
<comment type="similarity">
    <text evidence="9">Belongs to the ETF-QO/FixC family.</text>
</comment>
<gene>
    <name type="primary">CIR2</name>
    <name type="ordered locus">YOR356W</name>
</gene>
<name>ETFD_YEAST</name>
<dbReference type="EC" id="1.5.5.1"/>
<dbReference type="EMBL" id="Z75264">
    <property type="protein sequence ID" value="CAA99685.1"/>
    <property type="molecule type" value="Genomic_DNA"/>
</dbReference>
<dbReference type="EMBL" id="BK006948">
    <property type="protein sequence ID" value="DAA11117.1"/>
    <property type="molecule type" value="Genomic_DNA"/>
</dbReference>
<dbReference type="PIR" id="S67268">
    <property type="entry name" value="S67268"/>
</dbReference>
<dbReference type="RefSeq" id="NP_015001.1">
    <property type="nucleotide sequence ID" value="NM_001183776.1"/>
</dbReference>
<dbReference type="SMR" id="Q08822"/>
<dbReference type="BioGRID" id="34741">
    <property type="interactions" value="81"/>
</dbReference>
<dbReference type="DIP" id="DIP-6685N"/>
<dbReference type="FunCoup" id="Q08822">
    <property type="interactions" value="847"/>
</dbReference>
<dbReference type="IntAct" id="Q08822">
    <property type="interactions" value="9"/>
</dbReference>
<dbReference type="STRING" id="4932.YOR356W"/>
<dbReference type="iPTMnet" id="Q08822"/>
<dbReference type="PaxDb" id="4932-YOR356W"/>
<dbReference type="PeptideAtlas" id="Q08822"/>
<dbReference type="EnsemblFungi" id="YOR356W_mRNA">
    <property type="protein sequence ID" value="YOR356W"/>
    <property type="gene ID" value="YOR356W"/>
</dbReference>
<dbReference type="GeneID" id="854538"/>
<dbReference type="KEGG" id="sce:YOR356W"/>
<dbReference type="AGR" id="SGD:S000005883"/>
<dbReference type="SGD" id="S000005883">
    <property type="gene designation" value="CIR2"/>
</dbReference>
<dbReference type="VEuPathDB" id="FungiDB:YOR356W"/>
<dbReference type="eggNOG" id="KOG2415">
    <property type="taxonomic scope" value="Eukaryota"/>
</dbReference>
<dbReference type="GeneTree" id="ENSGT00390000010773"/>
<dbReference type="HOGENOM" id="CLU_009667_4_0_1"/>
<dbReference type="InParanoid" id="Q08822"/>
<dbReference type="OMA" id="INFQNCV"/>
<dbReference type="OrthoDB" id="437331at2759"/>
<dbReference type="BioCyc" id="YEAST:G3O-33827-MONOMER"/>
<dbReference type="Reactome" id="R-SCE-611105">
    <property type="pathway name" value="Respiratory electron transport"/>
</dbReference>
<dbReference type="BioGRID-ORCS" id="854538">
    <property type="hits" value="4 hits in 10 CRISPR screens"/>
</dbReference>
<dbReference type="PRO" id="PR:Q08822"/>
<dbReference type="Proteomes" id="UP000002311">
    <property type="component" value="Chromosome XV"/>
</dbReference>
<dbReference type="RNAct" id="Q08822">
    <property type="molecule type" value="protein"/>
</dbReference>
<dbReference type="GO" id="GO:0005743">
    <property type="term" value="C:mitochondrial inner membrane"/>
    <property type="evidence" value="ECO:0000318"/>
    <property type="project" value="GO_Central"/>
</dbReference>
<dbReference type="GO" id="GO:0005739">
    <property type="term" value="C:mitochondrion"/>
    <property type="evidence" value="ECO:0000314"/>
    <property type="project" value="SGD"/>
</dbReference>
<dbReference type="GO" id="GO:0051539">
    <property type="term" value="F:4 iron, 4 sulfur cluster binding"/>
    <property type="evidence" value="ECO:0007669"/>
    <property type="project" value="UniProtKB-KW"/>
</dbReference>
<dbReference type="GO" id="GO:0004174">
    <property type="term" value="F:electron-transferring-flavoprotein dehydrogenase activity"/>
    <property type="evidence" value="ECO:0000318"/>
    <property type="project" value="GO_Central"/>
</dbReference>
<dbReference type="GO" id="GO:0046872">
    <property type="term" value="F:metal ion binding"/>
    <property type="evidence" value="ECO:0007669"/>
    <property type="project" value="UniProtKB-KW"/>
</dbReference>
<dbReference type="GO" id="GO:0022900">
    <property type="term" value="P:electron transport chain"/>
    <property type="evidence" value="ECO:0000318"/>
    <property type="project" value="GO_Central"/>
</dbReference>
<dbReference type="FunFam" id="3.30.70.20:FF:000015">
    <property type="entry name" value="Electron transfer flavoprotein-ubiquinone oxidoreductase"/>
    <property type="match status" value="1"/>
</dbReference>
<dbReference type="Gene3D" id="3.30.70.20">
    <property type="match status" value="1"/>
</dbReference>
<dbReference type="Gene3D" id="3.30.9.90">
    <property type="match status" value="1"/>
</dbReference>
<dbReference type="Gene3D" id="3.50.50.60">
    <property type="entry name" value="FAD/NAD(P)-binding domain"/>
    <property type="match status" value="1"/>
</dbReference>
<dbReference type="InterPro" id="IPR017896">
    <property type="entry name" value="4Fe4S_Fe-S-bd"/>
</dbReference>
<dbReference type="InterPro" id="IPR040156">
    <property type="entry name" value="ETF-QO"/>
</dbReference>
<dbReference type="InterPro" id="IPR049398">
    <property type="entry name" value="ETF-QO/FixC_UQ-bd"/>
</dbReference>
<dbReference type="InterPro" id="IPR007859">
    <property type="entry name" value="ETF-QO/FixX_C"/>
</dbReference>
<dbReference type="InterPro" id="IPR036188">
    <property type="entry name" value="FAD/NAD-bd_sf"/>
</dbReference>
<dbReference type="PANTHER" id="PTHR10617">
    <property type="entry name" value="ELECTRON TRANSFER FLAVOPROTEIN-UBIQUINONE OXIDOREDUCTASE"/>
    <property type="match status" value="1"/>
</dbReference>
<dbReference type="PANTHER" id="PTHR10617:SF107">
    <property type="entry name" value="ELECTRON TRANSFER FLAVOPROTEIN-UBIQUINONE OXIDOREDUCTASE, MITOCHONDRIAL"/>
    <property type="match status" value="1"/>
</dbReference>
<dbReference type="Pfam" id="PF21162">
    <property type="entry name" value="ETFQO_UQ-bd"/>
    <property type="match status" value="1"/>
</dbReference>
<dbReference type="Pfam" id="PF12831">
    <property type="entry name" value="FAD_oxidored"/>
    <property type="match status" value="1"/>
</dbReference>
<dbReference type="Pfam" id="PF05187">
    <property type="entry name" value="Fer4_ETF_QO"/>
    <property type="match status" value="1"/>
</dbReference>
<dbReference type="SUPFAM" id="SSF54862">
    <property type="entry name" value="4Fe-4S ferredoxins"/>
    <property type="match status" value="1"/>
</dbReference>
<dbReference type="SUPFAM" id="SSF54373">
    <property type="entry name" value="FAD-linked reductases, C-terminal domain"/>
    <property type="match status" value="1"/>
</dbReference>
<dbReference type="SUPFAM" id="SSF51905">
    <property type="entry name" value="FAD/NAD(P)-binding domain"/>
    <property type="match status" value="1"/>
</dbReference>
<dbReference type="PROSITE" id="PS51379">
    <property type="entry name" value="4FE4S_FER_2"/>
    <property type="match status" value="1"/>
</dbReference>
<accession>Q08822</accession>
<accession>D6W351</accession>
<reference key="1">
    <citation type="journal article" date="1997" name="Nature">
        <title>The nucleotide sequence of Saccharomyces cerevisiae chromosome XV.</title>
        <authorList>
            <person name="Dujon B."/>
            <person name="Albermann K."/>
            <person name="Aldea M."/>
            <person name="Alexandraki D."/>
            <person name="Ansorge W."/>
            <person name="Arino J."/>
            <person name="Benes V."/>
            <person name="Bohn C."/>
            <person name="Bolotin-Fukuhara M."/>
            <person name="Bordonne R."/>
            <person name="Boyer J."/>
            <person name="Camasses A."/>
            <person name="Casamayor A."/>
            <person name="Casas C."/>
            <person name="Cheret G."/>
            <person name="Cziepluch C."/>
            <person name="Daignan-Fornier B."/>
            <person name="Dang V.-D."/>
            <person name="de Haan M."/>
            <person name="Delius H."/>
            <person name="Durand P."/>
            <person name="Fairhead C."/>
            <person name="Feldmann H."/>
            <person name="Gaillon L."/>
            <person name="Galisson F."/>
            <person name="Gamo F.-J."/>
            <person name="Gancedo C."/>
            <person name="Goffeau A."/>
            <person name="Goulding S.E."/>
            <person name="Grivell L.A."/>
            <person name="Habbig B."/>
            <person name="Hand N.J."/>
            <person name="Hani J."/>
            <person name="Hattenhorst U."/>
            <person name="Hebling U."/>
            <person name="Hernando Y."/>
            <person name="Herrero E."/>
            <person name="Heumann K."/>
            <person name="Hiesel R."/>
            <person name="Hilger F."/>
            <person name="Hofmann B."/>
            <person name="Hollenberg C.P."/>
            <person name="Hughes B."/>
            <person name="Jauniaux J.-C."/>
            <person name="Kalogeropoulos A."/>
            <person name="Katsoulou C."/>
            <person name="Kordes E."/>
            <person name="Lafuente M.J."/>
            <person name="Landt O."/>
            <person name="Louis E.J."/>
            <person name="Maarse A.C."/>
            <person name="Madania A."/>
            <person name="Mannhaupt G."/>
            <person name="Marck C."/>
            <person name="Martin R.P."/>
            <person name="Mewes H.-W."/>
            <person name="Michaux G."/>
            <person name="Paces V."/>
            <person name="Parle-McDermott A.G."/>
            <person name="Pearson B.M."/>
            <person name="Perrin A."/>
            <person name="Pettersson B."/>
            <person name="Poch O."/>
            <person name="Pohl T.M."/>
            <person name="Poirey R."/>
            <person name="Portetelle D."/>
            <person name="Pujol A."/>
            <person name="Purnelle B."/>
            <person name="Ramezani Rad M."/>
            <person name="Rechmann S."/>
            <person name="Schwager C."/>
            <person name="Schweizer M."/>
            <person name="Sor F."/>
            <person name="Sterky F."/>
            <person name="Tarassov I.A."/>
            <person name="Teodoru C."/>
            <person name="Tettelin H."/>
            <person name="Thierry A."/>
            <person name="Tobiasch E."/>
            <person name="Tzermia M."/>
            <person name="Uhlen M."/>
            <person name="Unseld M."/>
            <person name="Valens M."/>
            <person name="Vandenbol M."/>
            <person name="Vetter I."/>
            <person name="Vlcek C."/>
            <person name="Voet M."/>
            <person name="Volckaert G."/>
            <person name="Voss H."/>
            <person name="Wambutt R."/>
            <person name="Wedler H."/>
            <person name="Wiemann S."/>
            <person name="Winsor B."/>
            <person name="Wolfe K.H."/>
            <person name="Zollner A."/>
            <person name="Zumstein E."/>
            <person name="Kleine K."/>
        </authorList>
    </citation>
    <scope>NUCLEOTIDE SEQUENCE [LARGE SCALE GENOMIC DNA]</scope>
    <source>
        <strain>ATCC 204508 / S288c</strain>
    </source>
</reference>
<reference key="2">
    <citation type="journal article" date="2014" name="G3 (Bethesda)">
        <title>The reference genome sequence of Saccharomyces cerevisiae: Then and now.</title>
        <authorList>
            <person name="Engel S.R."/>
            <person name="Dietrich F.S."/>
            <person name="Fisk D.G."/>
            <person name="Binkley G."/>
            <person name="Balakrishnan R."/>
            <person name="Costanzo M.C."/>
            <person name="Dwight S.S."/>
            <person name="Hitz B.C."/>
            <person name="Karra K."/>
            <person name="Nash R.S."/>
            <person name="Weng S."/>
            <person name="Wong E.D."/>
            <person name="Lloyd P."/>
            <person name="Skrzypek M.S."/>
            <person name="Miyasato S.R."/>
            <person name="Simison M."/>
            <person name="Cherry J.M."/>
        </authorList>
    </citation>
    <scope>GENOME REANNOTATION</scope>
    <source>
        <strain>ATCC 204508 / S288c</strain>
    </source>
</reference>
<reference key="3">
    <citation type="journal article" date="2001" name="Biochemistry">
        <title>Yeast mitochondrial dehydrogenases are associated in a supramolecular complex.</title>
        <authorList>
            <person name="Grandier-Vazeille X."/>
            <person name="Bathany K."/>
            <person name="Chaignepain S."/>
            <person name="Camougrand N."/>
            <person name="Manon S."/>
            <person name="Schmitter J.-M."/>
        </authorList>
    </citation>
    <scope>IDENTIFICATION BY MASS SPECTROMETRY</scope>
    <scope>SUBCELLULAR LOCATION</scope>
</reference>
<reference key="4">
    <citation type="journal article" date="2003" name="Nature">
        <title>Global analysis of protein localization in budding yeast.</title>
        <authorList>
            <person name="Huh W.-K."/>
            <person name="Falvo J.V."/>
            <person name="Gerke L.C."/>
            <person name="Carroll A.S."/>
            <person name="Howson R.W."/>
            <person name="Weissman J.S."/>
            <person name="O'Shea E.K."/>
        </authorList>
    </citation>
    <scope>SUBCELLULAR LOCATION [LARGE SCALE ANALYSIS]</scope>
</reference>
<reference key="5">
    <citation type="journal article" date="2003" name="Nature">
        <title>Global analysis of protein expression in yeast.</title>
        <authorList>
            <person name="Ghaemmaghami S."/>
            <person name="Huh W.-K."/>
            <person name="Bower K."/>
            <person name="Howson R.W."/>
            <person name="Belle A."/>
            <person name="Dephoure N."/>
            <person name="O'Shea E.K."/>
            <person name="Weissman J.S."/>
        </authorList>
    </citation>
    <scope>LEVEL OF PROTEIN EXPRESSION [LARGE SCALE ANALYSIS]</scope>
</reference>
<reference key="6">
    <citation type="journal article" date="2003" name="Proc. Natl. Acad. Sci. U.S.A.">
        <title>The proteome of Saccharomyces cerevisiae mitochondria.</title>
        <authorList>
            <person name="Sickmann A."/>
            <person name="Reinders J."/>
            <person name="Wagner Y."/>
            <person name="Joppich C."/>
            <person name="Zahedi R.P."/>
            <person name="Meyer H.E."/>
            <person name="Schoenfisch B."/>
            <person name="Perschil I."/>
            <person name="Chacinska A."/>
            <person name="Guiard B."/>
            <person name="Rehling P."/>
            <person name="Pfanner N."/>
            <person name="Meisinger C."/>
        </authorList>
    </citation>
    <scope>SUBCELLULAR LOCATION [LARGE SCALE ANALYSIS]</scope>
    <source>
        <strain>ATCC 76625 / YPH499</strain>
    </source>
</reference>
<reference key="7">
    <citation type="journal article" date="2010" name="Open Microbiol. J.">
        <title>The Saccharomyces cerevisiae genes, AIM45, YGR207c/CIR1 and YOR356w/CIR2, are involved in cellular redox state under stress conditions.</title>
        <authorList>
            <person name="Lopes J."/>
            <person name="Pinto M.J."/>
            <person name="Rodrigues A."/>
            <person name="Vasconcelos F."/>
            <person name="Oliveira R."/>
        </authorList>
    </citation>
    <scope>DISRUPTION PHENOTYPE</scope>
</reference>
<protein>
    <recommendedName>
        <fullName>Probable electron transfer flavoprotein-ubiquinone oxidoreductase, mitochondrial</fullName>
        <shortName>ETF-QO</shortName>
        <shortName>ETF-ubiquinone oxidoreductase</shortName>
        <ecNumber>1.5.5.1</ecNumber>
    </recommendedName>
    <alternativeName>
        <fullName>Changed intracellular redox state protein 2</fullName>
    </alternativeName>
    <alternativeName>
        <fullName>Electron-transferring-flavoprotein dehydrogenase</fullName>
        <shortName>ETF dehydrogenase</shortName>
    </alternativeName>
</protein>
<keyword id="KW-0004">4Fe-4S</keyword>
<keyword id="KW-0249">Electron transport</keyword>
<keyword id="KW-0274">FAD</keyword>
<keyword id="KW-0285">Flavoprotein</keyword>
<keyword id="KW-0408">Iron</keyword>
<keyword id="KW-0411">Iron-sulfur</keyword>
<keyword id="KW-0472">Membrane</keyword>
<keyword id="KW-0479">Metal-binding</keyword>
<keyword id="KW-0496">Mitochondrion</keyword>
<keyword id="KW-0999">Mitochondrion inner membrane</keyword>
<keyword id="KW-0560">Oxidoreductase</keyword>
<keyword id="KW-1185">Reference proteome</keyword>
<keyword id="KW-0809">Transit peptide</keyword>
<keyword id="KW-0813">Transport</keyword>
<keyword id="KW-0830">Ubiquinone</keyword>
<proteinExistence type="evidence at protein level"/>